<evidence type="ECO:0000255" key="1">
    <source>
        <dbReference type="HAMAP-Rule" id="MF_00133"/>
    </source>
</evidence>
<name>TRPB_SALDC</name>
<organism>
    <name type="scientific">Salmonella dublin (strain CT_02021853)</name>
    <dbReference type="NCBI Taxonomy" id="439851"/>
    <lineage>
        <taxon>Bacteria</taxon>
        <taxon>Pseudomonadati</taxon>
        <taxon>Pseudomonadota</taxon>
        <taxon>Gammaproteobacteria</taxon>
        <taxon>Enterobacterales</taxon>
        <taxon>Enterobacteriaceae</taxon>
        <taxon>Salmonella</taxon>
    </lineage>
</organism>
<gene>
    <name evidence="1" type="primary">trpB</name>
    <name type="ordered locus">SeD_A1602</name>
</gene>
<accession>B5FU66</accession>
<keyword id="KW-0028">Amino-acid biosynthesis</keyword>
<keyword id="KW-0057">Aromatic amino acid biosynthesis</keyword>
<keyword id="KW-0456">Lyase</keyword>
<keyword id="KW-0663">Pyridoxal phosphate</keyword>
<keyword id="KW-0822">Tryptophan biosynthesis</keyword>
<comment type="function">
    <text evidence="1">The beta subunit is responsible for the synthesis of L-tryptophan from indole and L-serine.</text>
</comment>
<comment type="catalytic activity">
    <reaction evidence="1">
        <text>(1S,2R)-1-C-(indol-3-yl)glycerol 3-phosphate + L-serine = D-glyceraldehyde 3-phosphate + L-tryptophan + H2O</text>
        <dbReference type="Rhea" id="RHEA:10532"/>
        <dbReference type="ChEBI" id="CHEBI:15377"/>
        <dbReference type="ChEBI" id="CHEBI:33384"/>
        <dbReference type="ChEBI" id="CHEBI:57912"/>
        <dbReference type="ChEBI" id="CHEBI:58866"/>
        <dbReference type="ChEBI" id="CHEBI:59776"/>
        <dbReference type="EC" id="4.2.1.20"/>
    </reaction>
</comment>
<comment type="cofactor">
    <cofactor evidence="1">
        <name>pyridoxal 5'-phosphate</name>
        <dbReference type="ChEBI" id="CHEBI:597326"/>
    </cofactor>
</comment>
<comment type="pathway">
    <text evidence="1">Amino-acid biosynthesis; L-tryptophan biosynthesis; L-tryptophan from chorismate: step 5/5.</text>
</comment>
<comment type="subunit">
    <text evidence="1">Tetramer of two alpha and two beta chains.</text>
</comment>
<comment type="similarity">
    <text evidence="1">Belongs to the TrpB family.</text>
</comment>
<sequence length="397" mass="42868">MTTLLNPYFGEFGGMYVPQILMPALNQLEEAFVSAQKDPEFQAQFADLLKNYAGRPTALTKCQNITAGTRTTLYLKREDLLHGGAHKTNQVLGQALLAKRMGKSEIIAETGAGQHGVASALASALLGLKCRIYMGAKDVERQSPNVFRMRLMGAEVIPVHSGSATLKDACNEALRDWSGSYETAHYMLGTAAGPHPYPTIVREFQRMIGEETKAQILDKEGRLPDAVIACVGGGSNAIGMFADFINDTSVGLIGVEPGGHGIETGEHGAPLKHGRVGIYFGMKAPMMQTADGQIEESYSISAGLDFPSVGPQHAYLNSIGRADYVSITDDEALEAFKTLCRHEGIIPALESSHALAHALKMMREQPEKEQLLVVNLSGRGDKDIFTVHDILKARGEI</sequence>
<reference key="1">
    <citation type="journal article" date="2011" name="J. Bacteriol.">
        <title>Comparative genomics of 28 Salmonella enterica isolates: evidence for CRISPR-mediated adaptive sublineage evolution.</title>
        <authorList>
            <person name="Fricke W.F."/>
            <person name="Mammel M.K."/>
            <person name="McDermott P.F."/>
            <person name="Tartera C."/>
            <person name="White D.G."/>
            <person name="Leclerc J.E."/>
            <person name="Ravel J."/>
            <person name="Cebula T.A."/>
        </authorList>
    </citation>
    <scope>NUCLEOTIDE SEQUENCE [LARGE SCALE GENOMIC DNA]</scope>
    <source>
        <strain>CT_02021853</strain>
    </source>
</reference>
<feature type="chain" id="PRO_1000095816" description="Tryptophan synthase beta chain">
    <location>
        <begin position="1"/>
        <end position="397"/>
    </location>
</feature>
<feature type="modified residue" description="N6-(pyridoxal phosphate)lysine" evidence="1">
    <location>
        <position position="87"/>
    </location>
</feature>
<protein>
    <recommendedName>
        <fullName evidence="1">Tryptophan synthase beta chain</fullName>
        <ecNumber evidence="1">4.2.1.20</ecNumber>
    </recommendedName>
</protein>
<dbReference type="EC" id="4.2.1.20" evidence="1"/>
<dbReference type="EMBL" id="CP001144">
    <property type="protein sequence ID" value="ACH74600.1"/>
    <property type="molecule type" value="Genomic_DNA"/>
</dbReference>
<dbReference type="RefSeq" id="WP_000209485.1">
    <property type="nucleotide sequence ID" value="NC_011205.1"/>
</dbReference>
<dbReference type="SMR" id="B5FU66"/>
<dbReference type="KEGG" id="sed:SeD_A1602"/>
<dbReference type="HOGENOM" id="CLU_016734_3_1_6"/>
<dbReference type="UniPathway" id="UPA00035">
    <property type="reaction ID" value="UER00044"/>
</dbReference>
<dbReference type="Proteomes" id="UP000008322">
    <property type="component" value="Chromosome"/>
</dbReference>
<dbReference type="GO" id="GO:0005737">
    <property type="term" value="C:cytoplasm"/>
    <property type="evidence" value="ECO:0007669"/>
    <property type="project" value="TreeGrafter"/>
</dbReference>
<dbReference type="GO" id="GO:0004834">
    <property type="term" value="F:tryptophan synthase activity"/>
    <property type="evidence" value="ECO:0007669"/>
    <property type="project" value="UniProtKB-UniRule"/>
</dbReference>
<dbReference type="CDD" id="cd06446">
    <property type="entry name" value="Trp-synth_B"/>
    <property type="match status" value="1"/>
</dbReference>
<dbReference type="FunFam" id="3.40.50.1100:FF:000001">
    <property type="entry name" value="Tryptophan synthase beta chain"/>
    <property type="match status" value="1"/>
</dbReference>
<dbReference type="FunFam" id="3.40.50.1100:FF:000004">
    <property type="entry name" value="Tryptophan synthase beta chain"/>
    <property type="match status" value="1"/>
</dbReference>
<dbReference type="Gene3D" id="3.40.50.1100">
    <property type="match status" value="2"/>
</dbReference>
<dbReference type="HAMAP" id="MF_00133">
    <property type="entry name" value="Trp_synth_beta"/>
    <property type="match status" value="1"/>
</dbReference>
<dbReference type="InterPro" id="IPR006653">
    <property type="entry name" value="Trp_synth_b_CS"/>
</dbReference>
<dbReference type="InterPro" id="IPR006654">
    <property type="entry name" value="Trp_synth_beta"/>
</dbReference>
<dbReference type="InterPro" id="IPR023026">
    <property type="entry name" value="Trp_synth_beta/beta-like"/>
</dbReference>
<dbReference type="InterPro" id="IPR001926">
    <property type="entry name" value="TrpB-like_PALP"/>
</dbReference>
<dbReference type="InterPro" id="IPR036052">
    <property type="entry name" value="TrpB-like_PALP_sf"/>
</dbReference>
<dbReference type="NCBIfam" id="TIGR00263">
    <property type="entry name" value="trpB"/>
    <property type="match status" value="1"/>
</dbReference>
<dbReference type="PANTHER" id="PTHR48077:SF3">
    <property type="entry name" value="TRYPTOPHAN SYNTHASE"/>
    <property type="match status" value="1"/>
</dbReference>
<dbReference type="PANTHER" id="PTHR48077">
    <property type="entry name" value="TRYPTOPHAN SYNTHASE-RELATED"/>
    <property type="match status" value="1"/>
</dbReference>
<dbReference type="Pfam" id="PF00291">
    <property type="entry name" value="PALP"/>
    <property type="match status" value="1"/>
</dbReference>
<dbReference type="PIRSF" id="PIRSF001413">
    <property type="entry name" value="Trp_syn_beta"/>
    <property type="match status" value="1"/>
</dbReference>
<dbReference type="SUPFAM" id="SSF53686">
    <property type="entry name" value="Tryptophan synthase beta subunit-like PLP-dependent enzymes"/>
    <property type="match status" value="1"/>
</dbReference>
<dbReference type="PROSITE" id="PS00168">
    <property type="entry name" value="TRP_SYNTHASE_BETA"/>
    <property type="match status" value="1"/>
</dbReference>
<proteinExistence type="inferred from homology"/>